<proteinExistence type="inferred from homology"/>
<name>HUTI_ROSDO</name>
<reference key="1">
    <citation type="journal article" date="2007" name="J. Bacteriol.">
        <title>The complete genome sequence of Roseobacter denitrificans reveals a mixotrophic rather than photosynthetic metabolism.</title>
        <authorList>
            <person name="Swingley W.D."/>
            <person name="Sadekar S."/>
            <person name="Mastrian S.D."/>
            <person name="Matthies H.J."/>
            <person name="Hao J."/>
            <person name="Ramos H."/>
            <person name="Acharya C.R."/>
            <person name="Conrad A.L."/>
            <person name="Taylor H.L."/>
            <person name="Dejesa L.C."/>
            <person name="Shah M.K."/>
            <person name="O'Huallachain M.E."/>
            <person name="Lince M.T."/>
            <person name="Blankenship R.E."/>
            <person name="Beatty J.T."/>
            <person name="Touchman J.W."/>
        </authorList>
    </citation>
    <scope>NUCLEOTIDE SEQUENCE [LARGE SCALE GENOMIC DNA]</scope>
    <source>
        <strain>ATCC 33942 / OCh 114</strain>
    </source>
</reference>
<protein>
    <recommendedName>
        <fullName evidence="1">Imidazolonepropionase</fullName>
        <ecNumber evidence="1">3.5.2.7</ecNumber>
    </recommendedName>
    <alternativeName>
        <fullName evidence="1">Imidazolone-5-propionate hydrolase</fullName>
    </alternativeName>
</protein>
<dbReference type="EC" id="3.5.2.7" evidence="1"/>
<dbReference type="EMBL" id="CP000362">
    <property type="protein sequence ID" value="ABG33150.1"/>
    <property type="molecule type" value="Genomic_DNA"/>
</dbReference>
<dbReference type="RefSeq" id="WP_011569761.1">
    <property type="nucleotide sequence ID" value="NC_008209.1"/>
</dbReference>
<dbReference type="SMR" id="Q162E3"/>
<dbReference type="STRING" id="375451.RD1_3677"/>
<dbReference type="KEGG" id="rde:RD1_3677"/>
<dbReference type="eggNOG" id="COG1228">
    <property type="taxonomic scope" value="Bacteria"/>
</dbReference>
<dbReference type="HOGENOM" id="CLU_041647_0_0_5"/>
<dbReference type="OrthoDB" id="9776455at2"/>
<dbReference type="UniPathway" id="UPA00379">
    <property type="reaction ID" value="UER00551"/>
</dbReference>
<dbReference type="Proteomes" id="UP000007029">
    <property type="component" value="Chromosome"/>
</dbReference>
<dbReference type="GO" id="GO:0005737">
    <property type="term" value="C:cytoplasm"/>
    <property type="evidence" value="ECO:0007669"/>
    <property type="project" value="UniProtKB-SubCell"/>
</dbReference>
<dbReference type="GO" id="GO:0050480">
    <property type="term" value="F:imidazolonepropionase activity"/>
    <property type="evidence" value="ECO:0007669"/>
    <property type="project" value="UniProtKB-UniRule"/>
</dbReference>
<dbReference type="GO" id="GO:0005506">
    <property type="term" value="F:iron ion binding"/>
    <property type="evidence" value="ECO:0007669"/>
    <property type="project" value="UniProtKB-UniRule"/>
</dbReference>
<dbReference type="GO" id="GO:0008270">
    <property type="term" value="F:zinc ion binding"/>
    <property type="evidence" value="ECO:0007669"/>
    <property type="project" value="UniProtKB-UniRule"/>
</dbReference>
<dbReference type="GO" id="GO:0019556">
    <property type="term" value="P:L-histidine catabolic process to glutamate and formamide"/>
    <property type="evidence" value="ECO:0007669"/>
    <property type="project" value="UniProtKB-UniPathway"/>
</dbReference>
<dbReference type="GO" id="GO:0019557">
    <property type="term" value="P:L-histidine catabolic process to glutamate and formate"/>
    <property type="evidence" value="ECO:0007669"/>
    <property type="project" value="UniProtKB-UniPathway"/>
</dbReference>
<dbReference type="CDD" id="cd01296">
    <property type="entry name" value="Imidazolone-5PH"/>
    <property type="match status" value="1"/>
</dbReference>
<dbReference type="FunFam" id="3.20.20.140:FF:000007">
    <property type="entry name" value="Imidazolonepropionase"/>
    <property type="match status" value="1"/>
</dbReference>
<dbReference type="Gene3D" id="3.20.20.140">
    <property type="entry name" value="Metal-dependent hydrolases"/>
    <property type="match status" value="1"/>
</dbReference>
<dbReference type="Gene3D" id="2.30.40.10">
    <property type="entry name" value="Urease, subunit C, domain 1"/>
    <property type="match status" value="1"/>
</dbReference>
<dbReference type="HAMAP" id="MF_00372">
    <property type="entry name" value="HutI"/>
    <property type="match status" value="1"/>
</dbReference>
<dbReference type="InterPro" id="IPR013108">
    <property type="entry name" value="Amidohydro_3"/>
</dbReference>
<dbReference type="InterPro" id="IPR005920">
    <property type="entry name" value="HutI"/>
</dbReference>
<dbReference type="InterPro" id="IPR011059">
    <property type="entry name" value="Metal-dep_hydrolase_composite"/>
</dbReference>
<dbReference type="InterPro" id="IPR032466">
    <property type="entry name" value="Metal_Hydrolase"/>
</dbReference>
<dbReference type="NCBIfam" id="TIGR01224">
    <property type="entry name" value="hutI"/>
    <property type="match status" value="1"/>
</dbReference>
<dbReference type="PANTHER" id="PTHR42752">
    <property type="entry name" value="IMIDAZOLONEPROPIONASE"/>
    <property type="match status" value="1"/>
</dbReference>
<dbReference type="PANTHER" id="PTHR42752:SF1">
    <property type="entry name" value="IMIDAZOLONEPROPIONASE-RELATED"/>
    <property type="match status" value="1"/>
</dbReference>
<dbReference type="Pfam" id="PF07969">
    <property type="entry name" value="Amidohydro_3"/>
    <property type="match status" value="1"/>
</dbReference>
<dbReference type="SUPFAM" id="SSF51338">
    <property type="entry name" value="Composite domain of metallo-dependent hydrolases"/>
    <property type="match status" value="1"/>
</dbReference>
<dbReference type="SUPFAM" id="SSF51556">
    <property type="entry name" value="Metallo-dependent hydrolases"/>
    <property type="match status" value="1"/>
</dbReference>
<sequence>MLFTNARIVTLRDDQDYGLIEEGAIATDGDQIAWVGPSADVPDAYRSETTHDLGGRLVTPALIDCHTHVVFGGNRATEFELRLNGASYEEVARAGGGIVSTVTATRGASEAALLADALTRVDALIAEGVTLIEVKSGYGLDRDTELKMLRVARQIASARPVDVRTSFLGAHAVPPEFKGNPDAYIDDICIPTLHAAHAEGLVDAVDGFCEGIAFDTAQISRVFDVAGELGLPIKLHAEQLSNIGGTQLAARYGALSADHVEYATDADAQALAKSGTVAVVLPGAFYTLRETQVPPIASFRKHAVRMALATDCNPGSSPLTSPLLAMNMACTLFRMTPLEALLGMTAHAAAALGEQDRGRIMAGARADLCVWNAQHPSELAYRIGFNPLHQRIFKGAI</sequence>
<keyword id="KW-0963">Cytoplasm</keyword>
<keyword id="KW-0369">Histidine metabolism</keyword>
<keyword id="KW-0378">Hydrolase</keyword>
<keyword id="KW-0408">Iron</keyword>
<keyword id="KW-0479">Metal-binding</keyword>
<keyword id="KW-1185">Reference proteome</keyword>
<keyword id="KW-0862">Zinc</keyword>
<accession>Q162E3</accession>
<organism>
    <name type="scientific">Roseobacter denitrificans (strain ATCC 33942 / OCh 114)</name>
    <name type="common">Erythrobacter sp. (strain OCh 114)</name>
    <name type="synonym">Roseobacter denitrificans</name>
    <dbReference type="NCBI Taxonomy" id="375451"/>
    <lineage>
        <taxon>Bacteria</taxon>
        <taxon>Pseudomonadati</taxon>
        <taxon>Pseudomonadota</taxon>
        <taxon>Alphaproteobacteria</taxon>
        <taxon>Rhodobacterales</taxon>
        <taxon>Roseobacteraceae</taxon>
        <taxon>Roseobacter</taxon>
    </lineage>
</organism>
<comment type="function">
    <text evidence="1">Catalyzes the hydrolytic cleavage of the carbon-nitrogen bond in imidazolone-5-propanoate to yield N-formimidoyl-L-glutamate. It is the third step in the universal histidine degradation pathway.</text>
</comment>
<comment type="catalytic activity">
    <reaction evidence="1">
        <text>4-imidazolone-5-propanoate + H2O = N-formimidoyl-L-glutamate</text>
        <dbReference type="Rhea" id="RHEA:23660"/>
        <dbReference type="ChEBI" id="CHEBI:15377"/>
        <dbReference type="ChEBI" id="CHEBI:58928"/>
        <dbReference type="ChEBI" id="CHEBI:77893"/>
        <dbReference type="EC" id="3.5.2.7"/>
    </reaction>
</comment>
<comment type="cofactor">
    <cofactor evidence="1">
        <name>Zn(2+)</name>
        <dbReference type="ChEBI" id="CHEBI:29105"/>
    </cofactor>
    <cofactor evidence="1">
        <name>Fe(3+)</name>
        <dbReference type="ChEBI" id="CHEBI:29034"/>
    </cofactor>
    <text evidence="1">Binds 1 zinc or iron ion per subunit.</text>
</comment>
<comment type="pathway">
    <text evidence="1">Amino-acid degradation; L-histidine degradation into L-glutamate; N-formimidoyl-L-glutamate from L-histidine: step 3/3.</text>
</comment>
<comment type="subcellular location">
    <subcellularLocation>
        <location evidence="1">Cytoplasm</location>
    </subcellularLocation>
</comment>
<comment type="similarity">
    <text evidence="1">Belongs to the metallo-dependent hydrolases superfamily. HutI family.</text>
</comment>
<evidence type="ECO:0000255" key="1">
    <source>
        <dbReference type="HAMAP-Rule" id="MF_00372"/>
    </source>
</evidence>
<gene>
    <name evidence="1" type="primary">hutI</name>
    <name type="ordered locus">RD1_3677</name>
</gene>
<feature type="chain" id="PRO_0000306501" description="Imidazolonepropionase">
    <location>
        <begin position="1"/>
        <end position="397"/>
    </location>
</feature>
<feature type="binding site" evidence="1">
    <location>
        <position position="66"/>
    </location>
    <ligand>
        <name>Fe(3+)</name>
        <dbReference type="ChEBI" id="CHEBI:29034"/>
    </ligand>
</feature>
<feature type="binding site" evidence="1">
    <location>
        <position position="66"/>
    </location>
    <ligand>
        <name>Zn(2+)</name>
        <dbReference type="ChEBI" id="CHEBI:29105"/>
    </ligand>
</feature>
<feature type="binding site" evidence="1">
    <location>
        <position position="68"/>
    </location>
    <ligand>
        <name>Fe(3+)</name>
        <dbReference type="ChEBI" id="CHEBI:29034"/>
    </ligand>
</feature>
<feature type="binding site" evidence="1">
    <location>
        <position position="68"/>
    </location>
    <ligand>
        <name>Zn(2+)</name>
        <dbReference type="ChEBI" id="CHEBI:29105"/>
    </ligand>
</feature>
<feature type="binding site" evidence="1">
    <location>
        <position position="75"/>
    </location>
    <ligand>
        <name>4-imidazolone-5-propanoate</name>
        <dbReference type="ChEBI" id="CHEBI:77893"/>
    </ligand>
</feature>
<feature type="binding site" evidence="1">
    <location>
        <position position="138"/>
    </location>
    <ligand>
        <name>4-imidazolone-5-propanoate</name>
        <dbReference type="ChEBI" id="CHEBI:77893"/>
    </ligand>
</feature>
<feature type="binding site" evidence="1">
    <location>
        <position position="138"/>
    </location>
    <ligand>
        <name>N-formimidoyl-L-glutamate</name>
        <dbReference type="ChEBI" id="CHEBI:58928"/>
    </ligand>
</feature>
<feature type="binding site" evidence="1">
    <location>
        <position position="171"/>
    </location>
    <ligand>
        <name>4-imidazolone-5-propanoate</name>
        <dbReference type="ChEBI" id="CHEBI:77893"/>
    </ligand>
</feature>
<feature type="binding site" evidence="1">
    <location>
        <position position="236"/>
    </location>
    <ligand>
        <name>Fe(3+)</name>
        <dbReference type="ChEBI" id="CHEBI:29034"/>
    </ligand>
</feature>
<feature type="binding site" evidence="1">
    <location>
        <position position="236"/>
    </location>
    <ligand>
        <name>Zn(2+)</name>
        <dbReference type="ChEBI" id="CHEBI:29105"/>
    </ligand>
</feature>
<feature type="binding site" evidence="1">
    <location>
        <position position="239"/>
    </location>
    <ligand>
        <name>4-imidazolone-5-propanoate</name>
        <dbReference type="ChEBI" id="CHEBI:77893"/>
    </ligand>
</feature>
<feature type="binding site" evidence="1">
    <location>
        <position position="311"/>
    </location>
    <ligand>
        <name>Fe(3+)</name>
        <dbReference type="ChEBI" id="CHEBI:29034"/>
    </ligand>
</feature>
<feature type="binding site" evidence="1">
    <location>
        <position position="311"/>
    </location>
    <ligand>
        <name>Zn(2+)</name>
        <dbReference type="ChEBI" id="CHEBI:29105"/>
    </ligand>
</feature>
<feature type="binding site" evidence="1">
    <location>
        <position position="313"/>
    </location>
    <ligand>
        <name>N-formimidoyl-L-glutamate</name>
        <dbReference type="ChEBI" id="CHEBI:58928"/>
    </ligand>
</feature>
<feature type="binding site" evidence="1">
    <location>
        <position position="315"/>
    </location>
    <ligand>
        <name>N-formimidoyl-L-glutamate</name>
        <dbReference type="ChEBI" id="CHEBI:58928"/>
    </ligand>
</feature>
<feature type="binding site" evidence="1">
    <location>
        <position position="316"/>
    </location>
    <ligand>
        <name>4-imidazolone-5-propanoate</name>
        <dbReference type="ChEBI" id="CHEBI:77893"/>
    </ligand>
</feature>